<protein>
    <recommendedName>
        <fullName evidence="1">CTP synthase</fullName>
        <ecNumber evidence="1">6.3.4.2</ecNumber>
    </recommendedName>
    <alternativeName>
        <fullName evidence="1">Cytidine 5'-triphosphate synthase</fullName>
    </alternativeName>
    <alternativeName>
        <fullName evidence="1">Cytidine triphosphate synthetase</fullName>
        <shortName evidence="1">CTP synthetase</shortName>
        <shortName evidence="1">CTPS</shortName>
    </alternativeName>
    <alternativeName>
        <fullName evidence="1">UTP--ammonia ligase</fullName>
    </alternativeName>
</protein>
<comment type="function">
    <text evidence="1">Catalyzes the ATP-dependent amination of UTP to CTP with either L-glutamine or ammonia as the source of nitrogen. Regulates intracellular CTP levels through interactions with the four ribonucleotide triphosphates.</text>
</comment>
<comment type="catalytic activity">
    <reaction evidence="1">
        <text>UTP + L-glutamine + ATP + H2O = CTP + L-glutamate + ADP + phosphate + 2 H(+)</text>
        <dbReference type="Rhea" id="RHEA:26426"/>
        <dbReference type="ChEBI" id="CHEBI:15377"/>
        <dbReference type="ChEBI" id="CHEBI:15378"/>
        <dbReference type="ChEBI" id="CHEBI:29985"/>
        <dbReference type="ChEBI" id="CHEBI:30616"/>
        <dbReference type="ChEBI" id="CHEBI:37563"/>
        <dbReference type="ChEBI" id="CHEBI:43474"/>
        <dbReference type="ChEBI" id="CHEBI:46398"/>
        <dbReference type="ChEBI" id="CHEBI:58359"/>
        <dbReference type="ChEBI" id="CHEBI:456216"/>
        <dbReference type="EC" id="6.3.4.2"/>
    </reaction>
</comment>
<comment type="catalytic activity">
    <reaction evidence="1">
        <text>L-glutamine + H2O = L-glutamate + NH4(+)</text>
        <dbReference type="Rhea" id="RHEA:15889"/>
        <dbReference type="ChEBI" id="CHEBI:15377"/>
        <dbReference type="ChEBI" id="CHEBI:28938"/>
        <dbReference type="ChEBI" id="CHEBI:29985"/>
        <dbReference type="ChEBI" id="CHEBI:58359"/>
    </reaction>
</comment>
<comment type="catalytic activity">
    <reaction evidence="1">
        <text>UTP + NH4(+) + ATP = CTP + ADP + phosphate + 2 H(+)</text>
        <dbReference type="Rhea" id="RHEA:16597"/>
        <dbReference type="ChEBI" id="CHEBI:15378"/>
        <dbReference type="ChEBI" id="CHEBI:28938"/>
        <dbReference type="ChEBI" id="CHEBI:30616"/>
        <dbReference type="ChEBI" id="CHEBI:37563"/>
        <dbReference type="ChEBI" id="CHEBI:43474"/>
        <dbReference type="ChEBI" id="CHEBI:46398"/>
        <dbReference type="ChEBI" id="CHEBI:456216"/>
    </reaction>
</comment>
<comment type="activity regulation">
    <text evidence="1">Allosterically activated by GTP, when glutamine is the substrate; GTP has no effect on the reaction when ammonia is the substrate. The allosteric effector GTP functions by stabilizing the protein conformation that binds the tetrahedral intermediate(s) formed during glutamine hydrolysis. Inhibited by the product CTP, via allosteric rather than competitive inhibition.</text>
</comment>
<comment type="pathway">
    <text evidence="1">Pyrimidine metabolism; CTP biosynthesis via de novo pathway; CTP from UDP: step 2/2.</text>
</comment>
<comment type="subunit">
    <text evidence="1">Homotetramer.</text>
</comment>
<comment type="miscellaneous">
    <text evidence="1">CTPSs have evolved a hybrid strategy for distinguishing between UTP and CTP. The overlapping regions of the product feedback inhibitory and substrate sites recognize a common feature in both compounds, the triphosphate moiety. To differentiate isosteric substrate and product pyrimidine rings, an additional pocket far from the expected kinase/ligase catalytic site, specifically recognizes the cytosine and ribose portions of the product inhibitor.</text>
</comment>
<comment type="similarity">
    <text evidence="1">Belongs to the CTP synthase family.</text>
</comment>
<reference key="1">
    <citation type="submission" date="2007-05" db="EMBL/GenBank/DDBJ databases">
        <title>Complete sequence of chromosome of Staphylococcus aureus subsp. aureus JH9.</title>
        <authorList>
            <consortium name="US DOE Joint Genome Institute"/>
            <person name="Copeland A."/>
            <person name="Lucas S."/>
            <person name="Lapidus A."/>
            <person name="Barry K."/>
            <person name="Detter J.C."/>
            <person name="Glavina del Rio T."/>
            <person name="Hammon N."/>
            <person name="Israni S."/>
            <person name="Pitluck S."/>
            <person name="Chain P."/>
            <person name="Malfatti S."/>
            <person name="Shin M."/>
            <person name="Vergez L."/>
            <person name="Schmutz J."/>
            <person name="Larimer F."/>
            <person name="Land M."/>
            <person name="Hauser L."/>
            <person name="Kyrpides N."/>
            <person name="Kim E."/>
            <person name="Tomasz A."/>
            <person name="Richardson P."/>
        </authorList>
    </citation>
    <scope>NUCLEOTIDE SEQUENCE [LARGE SCALE GENOMIC DNA]</scope>
    <source>
        <strain>JH9</strain>
    </source>
</reference>
<organism>
    <name type="scientific">Staphylococcus aureus (strain JH9)</name>
    <dbReference type="NCBI Taxonomy" id="359786"/>
    <lineage>
        <taxon>Bacteria</taxon>
        <taxon>Bacillati</taxon>
        <taxon>Bacillota</taxon>
        <taxon>Bacilli</taxon>
        <taxon>Bacillales</taxon>
        <taxon>Staphylococcaceae</taxon>
        <taxon>Staphylococcus</taxon>
    </lineage>
</organism>
<name>PYRG_STAA9</name>
<evidence type="ECO:0000255" key="1">
    <source>
        <dbReference type="HAMAP-Rule" id="MF_01227"/>
    </source>
</evidence>
<gene>
    <name evidence="1" type="primary">pyrG</name>
    <name type="ordered locus">SaurJH9_2163</name>
</gene>
<proteinExistence type="inferred from homology"/>
<dbReference type="EC" id="6.3.4.2" evidence="1"/>
<dbReference type="EMBL" id="CP000703">
    <property type="protein sequence ID" value="ABQ49945.1"/>
    <property type="molecule type" value="Genomic_DNA"/>
</dbReference>
<dbReference type="RefSeq" id="WP_000159960.1">
    <property type="nucleotide sequence ID" value="NC_009487.1"/>
</dbReference>
<dbReference type="SMR" id="A5IUS2"/>
<dbReference type="MEROPS" id="C26.964"/>
<dbReference type="KEGG" id="saj:SaurJH9_2163"/>
<dbReference type="HOGENOM" id="CLU_011675_5_0_9"/>
<dbReference type="UniPathway" id="UPA00159">
    <property type="reaction ID" value="UER00277"/>
</dbReference>
<dbReference type="GO" id="GO:0005829">
    <property type="term" value="C:cytosol"/>
    <property type="evidence" value="ECO:0007669"/>
    <property type="project" value="TreeGrafter"/>
</dbReference>
<dbReference type="GO" id="GO:0005524">
    <property type="term" value="F:ATP binding"/>
    <property type="evidence" value="ECO:0007669"/>
    <property type="project" value="UniProtKB-KW"/>
</dbReference>
<dbReference type="GO" id="GO:0003883">
    <property type="term" value="F:CTP synthase activity"/>
    <property type="evidence" value="ECO:0007669"/>
    <property type="project" value="UniProtKB-UniRule"/>
</dbReference>
<dbReference type="GO" id="GO:0004359">
    <property type="term" value="F:glutaminase activity"/>
    <property type="evidence" value="ECO:0007669"/>
    <property type="project" value="RHEA"/>
</dbReference>
<dbReference type="GO" id="GO:0042802">
    <property type="term" value="F:identical protein binding"/>
    <property type="evidence" value="ECO:0007669"/>
    <property type="project" value="TreeGrafter"/>
</dbReference>
<dbReference type="GO" id="GO:0046872">
    <property type="term" value="F:metal ion binding"/>
    <property type="evidence" value="ECO:0007669"/>
    <property type="project" value="UniProtKB-KW"/>
</dbReference>
<dbReference type="GO" id="GO:0044210">
    <property type="term" value="P:'de novo' CTP biosynthetic process"/>
    <property type="evidence" value="ECO:0007669"/>
    <property type="project" value="UniProtKB-UniRule"/>
</dbReference>
<dbReference type="GO" id="GO:0019856">
    <property type="term" value="P:pyrimidine nucleobase biosynthetic process"/>
    <property type="evidence" value="ECO:0007669"/>
    <property type="project" value="TreeGrafter"/>
</dbReference>
<dbReference type="CDD" id="cd03113">
    <property type="entry name" value="CTPS_N"/>
    <property type="match status" value="1"/>
</dbReference>
<dbReference type="CDD" id="cd01746">
    <property type="entry name" value="GATase1_CTP_Synthase"/>
    <property type="match status" value="1"/>
</dbReference>
<dbReference type="FunFam" id="3.40.50.300:FF:000009">
    <property type="entry name" value="CTP synthase"/>
    <property type="match status" value="1"/>
</dbReference>
<dbReference type="FunFam" id="3.40.50.880:FF:000002">
    <property type="entry name" value="CTP synthase"/>
    <property type="match status" value="1"/>
</dbReference>
<dbReference type="Gene3D" id="3.40.50.880">
    <property type="match status" value="1"/>
</dbReference>
<dbReference type="Gene3D" id="3.40.50.300">
    <property type="entry name" value="P-loop containing nucleotide triphosphate hydrolases"/>
    <property type="match status" value="1"/>
</dbReference>
<dbReference type="HAMAP" id="MF_01227">
    <property type="entry name" value="PyrG"/>
    <property type="match status" value="1"/>
</dbReference>
<dbReference type="InterPro" id="IPR029062">
    <property type="entry name" value="Class_I_gatase-like"/>
</dbReference>
<dbReference type="InterPro" id="IPR004468">
    <property type="entry name" value="CTP_synthase"/>
</dbReference>
<dbReference type="InterPro" id="IPR017456">
    <property type="entry name" value="CTP_synthase_N"/>
</dbReference>
<dbReference type="InterPro" id="IPR017926">
    <property type="entry name" value="GATASE"/>
</dbReference>
<dbReference type="InterPro" id="IPR033828">
    <property type="entry name" value="GATase1_CTP_Synthase"/>
</dbReference>
<dbReference type="InterPro" id="IPR027417">
    <property type="entry name" value="P-loop_NTPase"/>
</dbReference>
<dbReference type="NCBIfam" id="NF003792">
    <property type="entry name" value="PRK05380.1"/>
    <property type="match status" value="1"/>
</dbReference>
<dbReference type="NCBIfam" id="TIGR00337">
    <property type="entry name" value="PyrG"/>
    <property type="match status" value="1"/>
</dbReference>
<dbReference type="PANTHER" id="PTHR11550">
    <property type="entry name" value="CTP SYNTHASE"/>
    <property type="match status" value="1"/>
</dbReference>
<dbReference type="PANTHER" id="PTHR11550:SF0">
    <property type="entry name" value="CTP SYNTHASE-RELATED"/>
    <property type="match status" value="1"/>
</dbReference>
<dbReference type="Pfam" id="PF06418">
    <property type="entry name" value="CTP_synth_N"/>
    <property type="match status" value="1"/>
</dbReference>
<dbReference type="Pfam" id="PF00117">
    <property type="entry name" value="GATase"/>
    <property type="match status" value="1"/>
</dbReference>
<dbReference type="SUPFAM" id="SSF52317">
    <property type="entry name" value="Class I glutamine amidotransferase-like"/>
    <property type="match status" value="1"/>
</dbReference>
<dbReference type="SUPFAM" id="SSF52540">
    <property type="entry name" value="P-loop containing nucleoside triphosphate hydrolases"/>
    <property type="match status" value="1"/>
</dbReference>
<dbReference type="PROSITE" id="PS51273">
    <property type="entry name" value="GATASE_TYPE_1"/>
    <property type="match status" value="1"/>
</dbReference>
<feature type="chain" id="PRO_1000139585" description="CTP synthase">
    <location>
        <begin position="1"/>
        <end position="536"/>
    </location>
</feature>
<feature type="domain" description="Glutamine amidotransferase type-1" evidence="1">
    <location>
        <begin position="293"/>
        <end position="535"/>
    </location>
</feature>
<feature type="region of interest" description="Amidoligase domain" evidence="1">
    <location>
        <begin position="1"/>
        <end position="267"/>
    </location>
</feature>
<feature type="active site" description="Nucleophile; for glutamine hydrolysis" evidence="1">
    <location>
        <position position="382"/>
    </location>
</feature>
<feature type="active site" evidence="1">
    <location>
        <position position="508"/>
    </location>
</feature>
<feature type="active site" evidence="1">
    <location>
        <position position="510"/>
    </location>
</feature>
<feature type="binding site" evidence="1">
    <location>
        <position position="13"/>
    </location>
    <ligand>
        <name>CTP</name>
        <dbReference type="ChEBI" id="CHEBI:37563"/>
        <note>allosteric inhibitor</note>
    </ligand>
</feature>
<feature type="binding site" evidence="1">
    <location>
        <position position="13"/>
    </location>
    <ligand>
        <name>UTP</name>
        <dbReference type="ChEBI" id="CHEBI:46398"/>
    </ligand>
</feature>
<feature type="binding site" evidence="1">
    <location>
        <begin position="14"/>
        <end position="19"/>
    </location>
    <ligand>
        <name>ATP</name>
        <dbReference type="ChEBI" id="CHEBI:30616"/>
    </ligand>
</feature>
<feature type="binding site" evidence="1">
    <location>
        <position position="54"/>
    </location>
    <ligand>
        <name>L-glutamine</name>
        <dbReference type="ChEBI" id="CHEBI:58359"/>
    </ligand>
</feature>
<feature type="binding site" evidence="1">
    <location>
        <position position="71"/>
    </location>
    <ligand>
        <name>ATP</name>
        <dbReference type="ChEBI" id="CHEBI:30616"/>
    </ligand>
</feature>
<feature type="binding site" evidence="1">
    <location>
        <position position="71"/>
    </location>
    <ligand>
        <name>Mg(2+)</name>
        <dbReference type="ChEBI" id="CHEBI:18420"/>
    </ligand>
</feature>
<feature type="binding site" evidence="1">
    <location>
        <position position="141"/>
    </location>
    <ligand>
        <name>Mg(2+)</name>
        <dbReference type="ChEBI" id="CHEBI:18420"/>
    </ligand>
</feature>
<feature type="binding site" evidence="1">
    <location>
        <begin position="148"/>
        <end position="150"/>
    </location>
    <ligand>
        <name>CTP</name>
        <dbReference type="ChEBI" id="CHEBI:37563"/>
        <note>allosteric inhibitor</note>
    </ligand>
</feature>
<feature type="binding site" evidence="1">
    <location>
        <begin position="188"/>
        <end position="193"/>
    </location>
    <ligand>
        <name>CTP</name>
        <dbReference type="ChEBI" id="CHEBI:37563"/>
        <note>allosteric inhibitor</note>
    </ligand>
</feature>
<feature type="binding site" evidence="1">
    <location>
        <begin position="188"/>
        <end position="193"/>
    </location>
    <ligand>
        <name>UTP</name>
        <dbReference type="ChEBI" id="CHEBI:46398"/>
    </ligand>
</feature>
<feature type="binding site" evidence="1">
    <location>
        <position position="224"/>
    </location>
    <ligand>
        <name>CTP</name>
        <dbReference type="ChEBI" id="CHEBI:37563"/>
        <note>allosteric inhibitor</note>
    </ligand>
</feature>
<feature type="binding site" evidence="1">
    <location>
        <position position="224"/>
    </location>
    <ligand>
        <name>UTP</name>
        <dbReference type="ChEBI" id="CHEBI:46398"/>
    </ligand>
</feature>
<feature type="binding site" evidence="1">
    <location>
        <begin position="240"/>
        <end position="242"/>
    </location>
    <ligand>
        <name>ATP</name>
        <dbReference type="ChEBI" id="CHEBI:30616"/>
    </ligand>
</feature>
<feature type="binding site" evidence="1">
    <location>
        <position position="355"/>
    </location>
    <ligand>
        <name>L-glutamine</name>
        <dbReference type="ChEBI" id="CHEBI:58359"/>
    </ligand>
</feature>
<feature type="binding site" evidence="1">
    <location>
        <begin position="383"/>
        <end position="386"/>
    </location>
    <ligand>
        <name>L-glutamine</name>
        <dbReference type="ChEBI" id="CHEBI:58359"/>
    </ligand>
</feature>
<feature type="binding site" evidence="1">
    <location>
        <position position="406"/>
    </location>
    <ligand>
        <name>L-glutamine</name>
        <dbReference type="ChEBI" id="CHEBI:58359"/>
    </ligand>
</feature>
<feature type="binding site" evidence="1">
    <location>
        <position position="463"/>
    </location>
    <ligand>
        <name>L-glutamine</name>
        <dbReference type="ChEBI" id="CHEBI:58359"/>
    </ligand>
</feature>
<accession>A5IUS2</accession>
<sequence>MTKFIFVTGGVVSSLGKGITASSLGRLLKDRGLNVTIQKFDPYLNVDPGTMSPYQHGEVFVTDDGAETDLDLGHYERFIDINLNKFSNVTAGKVYSHVLKKERRGDYLGGTVQVIPHITNEIKERLLLAGESTNADVVITEIGGTTGDIESLPFIEAIRQIRSDLGRENVMYVHCTLLPYIKAAGEMKTKPTQHSVKELRGLGIQPDLIVVRTEYEMTQDLKDKIALFCDINKESVIECRDADSLYEIPLQLSQQNMDDIVIKRLQLNAKYETQLDEWKQLLDIVNNLDGKITIGLVGKYVSLQDAYLSVVESLKHAGYPFAKDIDIRWIDSSEVTDENAAEYLADVDGILVPGGFGFRASEGKISAIKYARENNVPFFGICLGMQLATVEFSRNVLGLEGAHSAELDPATPYPIIDLLPEQKDIEDLGGTLRLGLYPCSIKEGTLAQDVYGKAEIEERHRHRYEFNNDYREQLEANGMVISGTSPDGRLVEMVEIPTNDFFIACQFHPEFLSRPNRPHPIFKSFIEASLKYQQNK</sequence>
<keyword id="KW-0067">ATP-binding</keyword>
<keyword id="KW-0315">Glutamine amidotransferase</keyword>
<keyword id="KW-0436">Ligase</keyword>
<keyword id="KW-0460">Magnesium</keyword>
<keyword id="KW-0479">Metal-binding</keyword>
<keyword id="KW-0547">Nucleotide-binding</keyword>
<keyword id="KW-0665">Pyrimidine biosynthesis</keyword>